<evidence type="ECO:0000255" key="1"/>
<evidence type="ECO:0000269" key="2">
    <source>
    </source>
</evidence>
<evidence type="ECO:0000269" key="3">
    <source>
    </source>
</evidence>
<evidence type="ECO:0000305" key="4"/>
<evidence type="ECO:0000305" key="5">
    <source>
    </source>
</evidence>
<evidence type="ECO:0000312" key="6">
    <source>
        <dbReference type="EMBL" id="CAB13167.1"/>
    </source>
</evidence>
<protein>
    <recommendedName>
        <fullName evidence="4">Probable guanidinium efflux system subunit GdnD</fullName>
    </recommendedName>
</protein>
<proteinExistence type="evidence at protein level"/>
<gene>
    <name evidence="6" type="primary">gdnD</name>
    <name type="synonym">ykkD</name>
    <name type="ordered locus">BSU13100</name>
</gene>
<dbReference type="EMBL" id="D78189">
    <property type="protein sequence ID" value="BAA11263.1"/>
    <property type="status" value="ALT_FRAME"/>
    <property type="molecule type" value="Genomic_DNA"/>
</dbReference>
<dbReference type="EMBL" id="AJ002571">
    <property type="protein sequence ID" value="CAA05589.1"/>
    <property type="molecule type" value="Genomic_DNA"/>
</dbReference>
<dbReference type="EMBL" id="AL009126">
    <property type="protein sequence ID" value="CAB13167.1"/>
    <property type="molecule type" value="Genomic_DNA"/>
</dbReference>
<dbReference type="PIR" id="B69857">
    <property type="entry name" value="B69857"/>
</dbReference>
<dbReference type="RefSeq" id="NP_389193.1">
    <property type="nucleotide sequence ID" value="NC_000964.3"/>
</dbReference>
<dbReference type="RefSeq" id="WP_003245695.1">
    <property type="nucleotide sequence ID" value="NZ_OZ025638.1"/>
</dbReference>
<dbReference type="SMR" id="P49857"/>
<dbReference type="FunCoup" id="P49857">
    <property type="interactions" value="158"/>
</dbReference>
<dbReference type="STRING" id="224308.BSU13100"/>
<dbReference type="CARD" id="ARO:3003064">
    <property type="molecule name" value="ykkD"/>
    <property type="mechanism identifier" value="ARO:0010000"/>
    <property type="mechanism name" value="antibiotic efflux"/>
</dbReference>
<dbReference type="TCDB" id="2.A.7.1.5">
    <property type="family name" value="the drug/metabolite transporter (dmt) superfamily"/>
</dbReference>
<dbReference type="PaxDb" id="224308-BSU13100"/>
<dbReference type="DNASU" id="938109"/>
<dbReference type="EnsemblBacteria" id="CAB13167">
    <property type="protein sequence ID" value="CAB13167"/>
    <property type="gene ID" value="BSU_13100"/>
</dbReference>
<dbReference type="GeneID" id="938109"/>
<dbReference type="KEGG" id="bsu:BSU13100"/>
<dbReference type="PATRIC" id="fig|224308.43.peg.1381"/>
<dbReference type="eggNOG" id="COG2076">
    <property type="taxonomic scope" value="Bacteria"/>
</dbReference>
<dbReference type="InParanoid" id="P49857"/>
<dbReference type="OrthoDB" id="21828at2"/>
<dbReference type="PhylomeDB" id="P49857"/>
<dbReference type="BioCyc" id="BSUB:BSU13100-MONOMER"/>
<dbReference type="Proteomes" id="UP000001570">
    <property type="component" value="Chromosome"/>
</dbReference>
<dbReference type="GO" id="GO:0005886">
    <property type="term" value="C:plasma membrane"/>
    <property type="evidence" value="ECO:0000318"/>
    <property type="project" value="GO_Central"/>
</dbReference>
<dbReference type="GO" id="GO:0022857">
    <property type="term" value="F:transmembrane transporter activity"/>
    <property type="evidence" value="ECO:0000318"/>
    <property type="project" value="GO_Central"/>
</dbReference>
<dbReference type="GO" id="GO:0006811">
    <property type="term" value="P:monoatomic ion transport"/>
    <property type="evidence" value="ECO:0007669"/>
    <property type="project" value="UniProtKB-KW"/>
</dbReference>
<dbReference type="GO" id="GO:0055085">
    <property type="term" value="P:transmembrane transport"/>
    <property type="evidence" value="ECO:0000318"/>
    <property type="project" value="GO_Central"/>
</dbReference>
<dbReference type="FunFam" id="1.10.3730.20:FF:000001">
    <property type="entry name" value="Quaternary ammonium compound resistance transporter SugE"/>
    <property type="match status" value="1"/>
</dbReference>
<dbReference type="Gene3D" id="1.10.3730.20">
    <property type="match status" value="1"/>
</dbReference>
<dbReference type="InterPro" id="IPR000390">
    <property type="entry name" value="Small_drug/metabolite_transptr"/>
</dbReference>
<dbReference type="InterPro" id="IPR045324">
    <property type="entry name" value="Small_multidrug_res"/>
</dbReference>
<dbReference type="PANTHER" id="PTHR30561:SF0">
    <property type="entry name" value="GUANIDINIUM EXPORTER"/>
    <property type="match status" value="1"/>
</dbReference>
<dbReference type="PANTHER" id="PTHR30561">
    <property type="entry name" value="SMR FAMILY PROTON-DEPENDENT DRUG EFFLUX TRANSPORTER SUGE"/>
    <property type="match status" value="1"/>
</dbReference>
<dbReference type="Pfam" id="PF00893">
    <property type="entry name" value="Multi_Drug_Res"/>
    <property type="match status" value="1"/>
</dbReference>
<dbReference type="SUPFAM" id="SSF103481">
    <property type="entry name" value="Multidrug resistance efflux transporter EmrE"/>
    <property type="match status" value="1"/>
</dbReference>
<reference key="1">
    <citation type="journal article" date="1996" name="J. Bacteriol.">
        <title>Oxygen-controlled regulation of the flavohemoglobin gene in Bacillus subtilis.</title>
        <authorList>
            <person name="Lacelle M."/>
            <person name="Kumano M."/>
            <person name="Kurita K."/>
            <person name="Yamane K."/>
            <person name="Zuber P."/>
            <person name="Nakano M.M."/>
        </authorList>
    </citation>
    <scope>NUCLEOTIDE SEQUENCE [GENOMIC DNA]</scope>
    <source>
        <strain>168</strain>
    </source>
</reference>
<reference key="2">
    <citation type="submission" date="1997-11" db="EMBL/GenBank/DDBJ databases">
        <title>Sequence of the Bacillus subtilis genome between xlyA and ykoR.</title>
        <authorList>
            <person name="Devine K.M."/>
        </authorList>
    </citation>
    <scope>NUCLEOTIDE SEQUENCE [GENOMIC DNA]</scope>
    <source>
        <strain>168</strain>
    </source>
</reference>
<reference key="3">
    <citation type="journal article" date="1997" name="Nature">
        <title>The complete genome sequence of the Gram-positive bacterium Bacillus subtilis.</title>
        <authorList>
            <person name="Kunst F."/>
            <person name="Ogasawara N."/>
            <person name="Moszer I."/>
            <person name="Albertini A.M."/>
            <person name="Alloni G."/>
            <person name="Azevedo V."/>
            <person name="Bertero M.G."/>
            <person name="Bessieres P."/>
            <person name="Bolotin A."/>
            <person name="Borchert S."/>
            <person name="Borriss R."/>
            <person name="Boursier L."/>
            <person name="Brans A."/>
            <person name="Braun M."/>
            <person name="Brignell S.C."/>
            <person name="Bron S."/>
            <person name="Brouillet S."/>
            <person name="Bruschi C.V."/>
            <person name="Caldwell B."/>
            <person name="Capuano V."/>
            <person name="Carter N.M."/>
            <person name="Choi S.-K."/>
            <person name="Codani J.-J."/>
            <person name="Connerton I.F."/>
            <person name="Cummings N.J."/>
            <person name="Daniel R.A."/>
            <person name="Denizot F."/>
            <person name="Devine K.M."/>
            <person name="Duesterhoeft A."/>
            <person name="Ehrlich S.D."/>
            <person name="Emmerson P.T."/>
            <person name="Entian K.-D."/>
            <person name="Errington J."/>
            <person name="Fabret C."/>
            <person name="Ferrari E."/>
            <person name="Foulger D."/>
            <person name="Fritz C."/>
            <person name="Fujita M."/>
            <person name="Fujita Y."/>
            <person name="Fuma S."/>
            <person name="Galizzi A."/>
            <person name="Galleron N."/>
            <person name="Ghim S.-Y."/>
            <person name="Glaser P."/>
            <person name="Goffeau A."/>
            <person name="Golightly E.J."/>
            <person name="Grandi G."/>
            <person name="Guiseppi G."/>
            <person name="Guy B.J."/>
            <person name="Haga K."/>
            <person name="Haiech J."/>
            <person name="Harwood C.R."/>
            <person name="Henaut A."/>
            <person name="Hilbert H."/>
            <person name="Holsappel S."/>
            <person name="Hosono S."/>
            <person name="Hullo M.-F."/>
            <person name="Itaya M."/>
            <person name="Jones L.-M."/>
            <person name="Joris B."/>
            <person name="Karamata D."/>
            <person name="Kasahara Y."/>
            <person name="Klaerr-Blanchard M."/>
            <person name="Klein C."/>
            <person name="Kobayashi Y."/>
            <person name="Koetter P."/>
            <person name="Koningstein G."/>
            <person name="Krogh S."/>
            <person name="Kumano M."/>
            <person name="Kurita K."/>
            <person name="Lapidus A."/>
            <person name="Lardinois S."/>
            <person name="Lauber J."/>
            <person name="Lazarevic V."/>
            <person name="Lee S.-M."/>
            <person name="Levine A."/>
            <person name="Liu H."/>
            <person name="Masuda S."/>
            <person name="Mauel C."/>
            <person name="Medigue C."/>
            <person name="Medina N."/>
            <person name="Mellado R.P."/>
            <person name="Mizuno M."/>
            <person name="Moestl D."/>
            <person name="Nakai S."/>
            <person name="Noback M."/>
            <person name="Noone D."/>
            <person name="O'Reilly M."/>
            <person name="Ogawa K."/>
            <person name="Ogiwara A."/>
            <person name="Oudega B."/>
            <person name="Park S.-H."/>
            <person name="Parro V."/>
            <person name="Pohl T.M."/>
            <person name="Portetelle D."/>
            <person name="Porwollik S."/>
            <person name="Prescott A.M."/>
            <person name="Presecan E."/>
            <person name="Pujic P."/>
            <person name="Purnelle B."/>
            <person name="Rapoport G."/>
            <person name="Rey M."/>
            <person name="Reynolds S."/>
            <person name="Rieger M."/>
            <person name="Rivolta C."/>
            <person name="Rocha E."/>
            <person name="Roche B."/>
            <person name="Rose M."/>
            <person name="Sadaie Y."/>
            <person name="Sato T."/>
            <person name="Scanlan E."/>
            <person name="Schleich S."/>
            <person name="Schroeter R."/>
            <person name="Scoffone F."/>
            <person name="Sekiguchi J."/>
            <person name="Sekowska A."/>
            <person name="Seror S.J."/>
            <person name="Serror P."/>
            <person name="Shin B.-S."/>
            <person name="Soldo B."/>
            <person name="Sorokin A."/>
            <person name="Tacconi E."/>
            <person name="Takagi T."/>
            <person name="Takahashi H."/>
            <person name="Takemaru K."/>
            <person name="Takeuchi M."/>
            <person name="Tamakoshi A."/>
            <person name="Tanaka T."/>
            <person name="Terpstra P."/>
            <person name="Tognoni A."/>
            <person name="Tosato V."/>
            <person name="Uchiyama S."/>
            <person name="Vandenbol M."/>
            <person name="Vannier F."/>
            <person name="Vassarotti A."/>
            <person name="Viari A."/>
            <person name="Wambutt R."/>
            <person name="Wedler E."/>
            <person name="Wedler H."/>
            <person name="Weitzenegger T."/>
            <person name="Winters P."/>
            <person name="Wipat A."/>
            <person name="Yamamoto H."/>
            <person name="Yamane K."/>
            <person name="Yasumoto K."/>
            <person name="Yata K."/>
            <person name="Yoshida K."/>
            <person name="Yoshikawa H.-F."/>
            <person name="Zumstein E."/>
            <person name="Yoshikawa H."/>
            <person name="Danchin A."/>
        </authorList>
    </citation>
    <scope>NUCLEOTIDE SEQUENCE [LARGE SCALE GENOMIC DNA]</scope>
    <source>
        <strain>168</strain>
    </source>
</reference>
<reference key="4">
    <citation type="journal article" date="2000" name="J. Bacteriol.">
        <title>A broad-specificity multidrug efflux pump requiring a pair of homologous SMR-type proteins.</title>
        <authorList>
            <person name="Jack D.L."/>
            <person name="Storms M.L."/>
            <person name="Tchieu J.H."/>
            <person name="Paulsen I.T."/>
            <person name="Saier M.H. Jr."/>
        </authorList>
    </citation>
    <scope>FUNCTION</scope>
    <scope>SUBUNIT</scope>
</reference>
<reference key="5">
    <citation type="journal article" date="2017" name="Mol. Cell">
        <title>Metabolism of free guanidine in bacteria is regulated by a widespread riboswitch class.</title>
        <authorList>
            <person name="Nelson J.W."/>
            <person name="Atilho R.M."/>
            <person name="Sherlock M.E."/>
            <person name="Stockbridge R.B."/>
            <person name="Breaker R.R."/>
        </authorList>
    </citation>
    <scope>FUNCTION</scope>
    <scope>INDUCTION</scope>
    <scope>DISRUPTION PHENOTYPE</scope>
</reference>
<feature type="chain" id="PRO_0000108113" description="Probable guanidinium efflux system subunit GdnD">
    <location>
        <begin position="1"/>
        <end position="105"/>
    </location>
</feature>
<feature type="transmembrane region" description="Helical" evidence="1">
    <location>
        <begin position="1"/>
        <end position="21"/>
    </location>
</feature>
<feature type="transmembrane region" description="Helical" evidence="1">
    <location>
        <begin position="32"/>
        <end position="52"/>
    </location>
</feature>
<feature type="transmembrane region" description="Helical" evidence="1">
    <location>
        <begin position="59"/>
        <end position="79"/>
    </location>
</feature>
<feature type="transmembrane region" description="Helical" evidence="1">
    <location>
        <begin position="85"/>
        <end position="105"/>
    </location>
</feature>
<comment type="function">
    <text evidence="2 3">Probably involved in guanidinium transport (PubMed:27989440). In vitro, confers resistance to a broad range of toxic compounds such as cationic dyes, neutral and anionic antimicrobials (PubMed:10735877).</text>
</comment>
<comment type="subunit">
    <text evidence="5">The efflux pump is composed of GdnC and GdnD.</text>
</comment>
<comment type="subcellular location">
    <subcellularLocation>
        <location evidence="4">Cell membrane</location>
        <topology evidence="1">Multi-pass membrane protein</topology>
    </subcellularLocation>
</comment>
<comment type="induction">
    <text evidence="3">Transcriptionally regulated by guanidine, via a guanidine-sensing riboswitch.</text>
</comment>
<comment type="disruption phenotype">
    <text evidence="3">Deletion of both gdnC and gdnD leads to a decrease in the concentration of guanidine required to inhibit bacterial growth.</text>
</comment>
<comment type="similarity">
    <text evidence="4">Belongs to the drug/metabolite transporter (DMT) superfamily. Small multidrug resistance (SMR) (TC 2.A.7.1) family. YkkC/YkkD subfamily.</text>
</comment>
<comment type="sequence caution" evidence="4">
    <conflict type="frameshift">
        <sequence resource="EMBL-CDS" id="BAA11263"/>
    </conflict>
</comment>
<name>GDND_BACSU</name>
<keyword id="KW-1003">Cell membrane</keyword>
<keyword id="KW-0406">Ion transport</keyword>
<keyword id="KW-0472">Membrane</keyword>
<keyword id="KW-1185">Reference proteome</keyword>
<keyword id="KW-0812">Transmembrane</keyword>
<keyword id="KW-1133">Transmembrane helix</keyword>
<keyword id="KW-0813">Transport</keyword>
<organism>
    <name type="scientific">Bacillus subtilis (strain 168)</name>
    <dbReference type="NCBI Taxonomy" id="224308"/>
    <lineage>
        <taxon>Bacteria</taxon>
        <taxon>Bacillati</taxon>
        <taxon>Bacillota</taxon>
        <taxon>Bacilli</taxon>
        <taxon>Bacillales</taxon>
        <taxon>Bacillaceae</taxon>
        <taxon>Bacillus</taxon>
    </lineage>
</organism>
<accession>P49857</accession>
<accession>O34690</accession>
<sequence length="105" mass="11325">MLHWISLLCAGCLEMAGVALMNQYAKEKSVKWVLLIIVGFAASFSLLSYAMETTPMGTAYAVWTGIGTAGGALIGILFYKEQKDAKRIFFIALILCSAVGLKILS</sequence>